<reference key="1">
    <citation type="submission" date="2007-03" db="EMBL/GenBank/DDBJ databases">
        <title>Annotation of Culex pipiens quinquefasciatus.</title>
        <authorList>
            <consortium name="The Broad Institute Genome Sequencing Platform"/>
            <person name="Atkinson P.W."/>
            <person name="Hemingway J."/>
            <person name="Christensen B.M."/>
            <person name="Higgs S."/>
            <person name="Kodira C.D."/>
            <person name="Hannick L.I."/>
            <person name="Megy K."/>
            <person name="O'Leary S.B."/>
            <person name="Pearson M."/>
            <person name="Haas B.J."/>
            <person name="Mauceli E."/>
            <person name="Wortman J.R."/>
            <person name="Lee N.H."/>
            <person name="Guigo R."/>
            <person name="Stanke M."/>
            <person name="Alvarado L."/>
            <person name="Amedeo P."/>
            <person name="Antoine C.H."/>
            <person name="Arensburger P."/>
            <person name="Bidwell S.L."/>
            <person name="Crawford M."/>
            <person name="Camaro F."/>
            <person name="Devon K."/>
            <person name="Engels R."/>
            <person name="Hammond M."/>
            <person name="Howarth C."/>
            <person name="Koehrsen M."/>
            <person name="Lawson D."/>
            <person name="Montgomery P."/>
            <person name="Nene V."/>
            <person name="Nusbaum C."/>
            <person name="Puiu D."/>
            <person name="Romero-Severson J."/>
            <person name="Severson D.W."/>
            <person name="Shumway M."/>
            <person name="Sisk P."/>
            <person name="Stolte C."/>
            <person name="Zeng Q."/>
            <person name="Eisenstadt E."/>
            <person name="Fraser-Liggett C.M."/>
            <person name="Strausberg R."/>
            <person name="Galagan J."/>
            <person name="Birren B."/>
            <person name="Collins F.H."/>
        </authorList>
    </citation>
    <scope>NUCLEOTIDE SEQUENCE [LARGE SCALE GENOMIC DNA]</scope>
    <source>
        <strain>JHB</strain>
    </source>
</reference>
<comment type="function">
    <text evidence="1">Involved in nonsense-mediated decay (NMD) of mRNAs containing premature stop codons. Probable component of kinase complex containing SMG1 and recruited to stalled ribosomes (By similarity).</text>
</comment>
<comment type="similarity">
    <text evidence="4">Belongs to the SMG8 family.</text>
</comment>
<keyword id="KW-0866">Nonsense-mediated mRNA decay</keyword>
<keyword id="KW-1185">Reference proteome</keyword>
<organism>
    <name type="scientific">Culex quinquefasciatus</name>
    <name type="common">Southern house mosquito</name>
    <name type="synonym">Culex pungens</name>
    <dbReference type="NCBI Taxonomy" id="7176"/>
    <lineage>
        <taxon>Eukaryota</taxon>
        <taxon>Metazoa</taxon>
        <taxon>Ecdysozoa</taxon>
        <taxon>Arthropoda</taxon>
        <taxon>Hexapoda</taxon>
        <taxon>Insecta</taxon>
        <taxon>Pterygota</taxon>
        <taxon>Neoptera</taxon>
        <taxon>Endopterygota</taxon>
        <taxon>Diptera</taxon>
        <taxon>Nematocera</taxon>
        <taxon>Culicoidea</taxon>
        <taxon>Culicidae</taxon>
        <taxon>Culicinae</taxon>
        <taxon>Culicini</taxon>
        <taxon>Culex</taxon>
        <taxon>Culex</taxon>
    </lineage>
</organism>
<feature type="chain" id="PRO_0000378171" description="Nonsense-mediated mRNA decay factor SMG8">
    <location>
        <begin position="1"/>
        <end position="912"/>
    </location>
</feature>
<feature type="region of interest" description="Disordered" evidence="3">
    <location>
        <begin position="565"/>
        <end position="630"/>
    </location>
</feature>
<feature type="compositionally biased region" description="Polar residues" evidence="3">
    <location>
        <begin position="570"/>
        <end position="602"/>
    </location>
</feature>
<feature type="compositionally biased region" description="Basic and acidic residues" evidence="3">
    <location>
        <begin position="604"/>
        <end position="614"/>
    </location>
</feature>
<accession>B0W730</accession>
<proteinExistence type="inferred from homology"/>
<sequence length="912" mass="103161">MNPINSFIFPDIPKDLGKILMKDDQQLIVVGIIGKSSTPDCNKLVGFNLLTIHPALTDTDPRDGRVKFYFENDGKILYLHFETTFDQHVMADLLAKAVQTGIQDNFINFNSTVRTRFARVLLFAIQVCHMIVLVEPSSVFDTSYLSIFKSLKIIREKYVLKFLPKLLKSSNLGNYMGKEARLCSPRFIFFFEGTSNIKPEDVEKLDGLECSVEEEIYKMLRNEFIITNNSAMSLFSIPRSKKFVFYNSDKRAKSNPLADSIDLLMKYLNKPAGGQNDDDEDLMSRLRPYDGYGMSAWSVGKSKRAEKKERSILALLKEHVAEAFEHGFDDSASKYRGRGHFVIPSFKTWYEGFKLLHKIFIDNPSNSSYETNDPDYKAFLQNFHKIIDIDERFFAEICEHGLELAMVNYKDMLPHHYSSTFHEKKYEQAHELFTRYARGPEVERHEQKLKDYCDSIWLNGKQQCEYPSLRGNPCALGKHKVKDPTEHSSGVIFVSACNCGRTQGHREDPYTIRQGNYDFYQIIAKSCSSCNVLERVKFPVFEPSSNDFRAAEFINKNLSNLMSFEHSNRTPDASTHPPMTNENSPHLSGSQKSQDSASNLTFSMDEKRDEENKSQKFGTQGEDEDETLEQETVNEIVIKVGEHSEDKAILRQPSTTEYLPGMLHAASPAGLLPQFPSWSLVCLGPSSIYTHNSGIPEHVQSGFLSGANFLLPWDVSVRLEHAQSWAASYEKIRNRKKNTSQPKSSESSNTFTLKIFLGVEYECLRGHRFIMSGPDTVLRGGSGSIVRDSGSKVVFNDMPIYFPCPCRSSNIAQLMRVHVVTPKAPVNVIVEPKVRILQGTTQNCLTFTTGLTEPIKLSQSAYWILRLPFIYEGDSGPLMPPAGVTVANAATHGVLMAGMFGIRESEISEELL</sequence>
<gene>
    <name type="ORF">CPIJ003128</name>
</gene>
<dbReference type="EMBL" id="DS231851">
    <property type="protein sequence ID" value="EDS37304.1"/>
    <property type="molecule type" value="Genomic_DNA"/>
</dbReference>
<dbReference type="RefSeq" id="XP_001844514.1">
    <property type="nucleotide sequence ID" value="XM_001844462.1"/>
</dbReference>
<dbReference type="SMR" id="B0W730"/>
<dbReference type="FunCoup" id="B0W730">
    <property type="interactions" value="2805"/>
</dbReference>
<dbReference type="STRING" id="7176.B0W730"/>
<dbReference type="EnsemblMetazoa" id="CPIJ003128-RA">
    <property type="protein sequence ID" value="CPIJ003128-PA"/>
    <property type="gene ID" value="CPIJ003128"/>
</dbReference>
<dbReference type="KEGG" id="cqu:CpipJ_CPIJ003128"/>
<dbReference type="VEuPathDB" id="VectorBase:CPIJ003128"/>
<dbReference type="VEuPathDB" id="VectorBase:CQUJHB014717"/>
<dbReference type="eggNOG" id="KOG3692">
    <property type="taxonomic scope" value="Eukaryota"/>
</dbReference>
<dbReference type="HOGENOM" id="CLU_008116_0_0_1"/>
<dbReference type="InParanoid" id="B0W730"/>
<dbReference type="OMA" id="MHSGCPK"/>
<dbReference type="OrthoDB" id="63589at2759"/>
<dbReference type="PhylomeDB" id="B0W730"/>
<dbReference type="Proteomes" id="UP000002320">
    <property type="component" value="Unassembled WGS sequence"/>
</dbReference>
<dbReference type="GO" id="GO:0000184">
    <property type="term" value="P:nuclear-transcribed mRNA catabolic process, nonsense-mediated decay"/>
    <property type="evidence" value="ECO:0000250"/>
    <property type="project" value="UniProtKB"/>
</dbReference>
<dbReference type="InterPro" id="IPR019354">
    <property type="entry name" value="SMG8-like"/>
</dbReference>
<dbReference type="PANTHER" id="PTHR13091">
    <property type="entry name" value="AMPLIFIED IN BREAST CANCER 2-RELATED"/>
    <property type="match status" value="1"/>
</dbReference>
<dbReference type="PANTHER" id="PTHR13091:SF0">
    <property type="entry name" value="NONSENSE-MEDIATED MRNA DECAY FACTOR SMG8"/>
    <property type="match status" value="1"/>
</dbReference>
<dbReference type="Pfam" id="PF10220">
    <property type="entry name" value="Smg8_Smg9"/>
    <property type="match status" value="1"/>
</dbReference>
<evidence type="ECO:0000250" key="1"/>
<evidence type="ECO:0000250" key="2">
    <source>
        <dbReference type="UniProtKB" id="Q8ND04"/>
    </source>
</evidence>
<evidence type="ECO:0000256" key="3">
    <source>
        <dbReference type="SAM" id="MobiDB-lite"/>
    </source>
</evidence>
<evidence type="ECO:0000305" key="4"/>
<name>SMG8_CULQU</name>
<protein>
    <recommendedName>
        <fullName evidence="2">Nonsense-mediated mRNA decay factor SMG8</fullName>
    </recommendedName>
    <alternativeName>
        <fullName>Protein smg-8 homolog</fullName>
    </alternativeName>
</protein>